<organism>
    <name type="scientific">Photorhabdus temperata</name>
    <dbReference type="NCBI Taxonomy" id="574560"/>
    <lineage>
        <taxon>Bacteria</taxon>
        <taxon>Pseudomonadati</taxon>
        <taxon>Pseudomonadota</taxon>
        <taxon>Gammaproteobacteria</taxon>
        <taxon>Enterobacterales</taxon>
        <taxon>Morganellaceae</taxon>
        <taxon>Photorhabdus</taxon>
    </lineage>
</organism>
<feature type="chain" id="PRO_0000351372" description="Autoinducer 2 import system permease protein LsrD">
    <location>
        <begin position="1"/>
        <end position="333"/>
    </location>
</feature>
<feature type="transmembrane region" description="Helical" evidence="2">
    <location>
        <begin position="7"/>
        <end position="27"/>
    </location>
</feature>
<feature type="transmembrane region" description="Helical" evidence="2">
    <location>
        <begin position="45"/>
        <end position="65"/>
    </location>
</feature>
<feature type="transmembrane region" description="Helical" evidence="2">
    <location>
        <begin position="70"/>
        <end position="90"/>
    </location>
</feature>
<feature type="transmembrane region" description="Helical" evidence="2">
    <location>
        <begin position="91"/>
        <end position="111"/>
    </location>
</feature>
<feature type="transmembrane region" description="Helical" evidence="2">
    <location>
        <begin position="119"/>
        <end position="139"/>
    </location>
</feature>
<feature type="transmembrane region" description="Helical" evidence="2">
    <location>
        <begin position="162"/>
        <end position="182"/>
    </location>
</feature>
<feature type="transmembrane region" description="Helical" evidence="2">
    <location>
        <begin position="212"/>
        <end position="232"/>
    </location>
</feature>
<feature type="transmembrane region" description="Helical" evidence="2">
    <location>
        <begin position="240"/>
        <end position="260"/>
    </location>
</feature>
<feature type="transmembrane region" description="Helical" evidence="2">
    <location>
        <begin position="261"/>
        <end position="281"/>
    </location>
</feature>
<feature type="transmembrane region" description="Helical" evidence="2">
    <location>
        <begin position="288"/>
        <end position="308"/>
    </location>
</feature>
<protein>
    <recommendedName>
        <fullName>Autoinducer 2 import system permease protein LsrD</fullName>
        <shortName>AI-2 import system permease protein LsrD</shortName>
    </recommendedName>
</protein>
<accession>Q2PBM1</accession>
<evidence type="ECO:0000250" key="1"/>
<evidence type="ECO:0000255" key="2"/>
<evidence type="ECO:0000305" key="3"/>
<proteinExistence type="inferred from homology"/>
<gene>
    <name type="primary">lsrD</name>
</gene>
<comment type="function">
    <text evidence="1">Part of the ABC transporter complex LsrABCD involved in autoinducer 2 (AI-2) import. Probably responsible for the translocation of the substrate across the membrane (By similarity).</text>
</comment>
<comment type="subunit">
    <text evidence="1">The complex is composed of two ATP-binding proteins (LsrA), two transmembrane proteins (LsrC and LsrD) and a solute-binding protein (LsrB).</text>
</comment>
<comment type="subcellular location">
    <subcellularLocation>
        <location evidence="1">Cell inner membrane</location>
        <topology evidence="1">Multi-pass membrane protein</topology>
    </subcellularLocation>
</comment>
<comment type="similarity">
    <text evidence="3">Belongs to the binding-protein-dependent transport system permease family. AraH/RbsC subfamily.</text>
</comment>
<reference key="1">
    <citation type="journal article" date="2006" name="J. Bacteriol.">
        <title>Whole-genome comparison between Photorhabdus strains to identify genomic regions involved in the specificity of nematode interaction.</title>
        <authorList>
            <person name="Gaudriault S."/>
            <person name="Duchaud E."/>
            <person name="Lanois A."/>
            <person name="Canoy A.-S."/>
            <person name="Bourot S."/>
            <person name="DeRose R."/>
            <person name="Kunst F."/>
            <person name="Boemare N."/>
            <person name="Givaudan A."/>
        </authorList>
    </citation>
    <scope>NUCLEOTIDE SEQUENCE [GENOMIC DNA]</scope>
    <source>
        <strain>C1 / NC19</strain>
    </source>
</reference>
<keyword id="KW-0997">Cell inner membrane</keyword>
<keyword id="KW-1003">Cell membrane</keyword>
<keyword id="KW-0472">Membrane</keyword>
<keyword id="KW-0812">Transmembrane</keyword>
<keyword id="KW-1133">Transmembrane helix</keyword>
<keyword id="KW-0813">Transport</keyword>
<name>LSRD_PHOTE</name>
<sequence length="333" mass="35209">MNIGQRYGWEFALAVLLVMEILLFGIANPRMLDINILLFSTSDFICIGIVALPLTMVIVSGGIDISFGSTIGLCAISLGVMNQADIPMAAAIPLTLNVGAMCGIINAALILYTGVNPLVITLGTLYLFGGSALLLSGIFGATGYEGIGGFPQAFTDFANLTLLGLPVPLAMFIICVLVFWLFMHRTHSGRNIFLIGQNNKAAYYTAIPVARTLYFIYSLTGIAAAIAAIVLVSYFGSARSDLGSSFLMPAITAVVLGGANIYGGSGSIIGTALAMLLIGYLQQGLQMIGIPNQISSALSGALLIIAVVGRSISLHRHQIRGWMQRRRNQKLPS</sequence>
<dbReference type="EMBL" id="AJ967009">
    <property type="protein sequence ID" value="CAI91187.1"/>
    <property type="molecule type" value="Genomic_DNA"/>
</dbReference>
<dbReference type="GO" id="GO:0005886">
    <property type="term" value="C:plasma membrane"/>
    <property type="evidence" value="ECO:0007669"/>
    <property type="project" value="UniProtKB-SubCell"/>
</dbReference>
<dbReference type="GO" id="GO:0022857">
    <property type="term" value="F:transmembrane transporter activity"/>
    <property type="evidence" value="ECO:0007669"/>
    <property type="project" value="InterPro"/>
</dbReference>
<dbReference type="CDD" id="cd06579">
    <property type="entry name" value="TM_PBP1_transp_AraH_like"/>
    <property type="match status" value="1"/>
</dbReference>
<dbReference type="InterPro" id="IPR001851">
    <property type="entry name" value="ABC_transp_permease"/>
</dbReference>
<dbReference type="NCBIfam" id="NF011612">
    <property type="entry name" value="PRK15038.1"/>
    <property type="match status" value="1"/>
</dbReference>
<dbReference type="PANTHER" id="PTHR32196">
    <property type="entry name" value="ABC TRANSPORTER PERMEASE PROTEIN YPHD-RELATED-RELATED"/>
    <property type="match status" value="1"/>
</dbReference>
<dbReference type="PANTHER" id="PTHR32196:SF71">
    <property type="entry name" value="AUTOINDUCER 2 IMPORT SYSTEM PERMEASE PROTEIN LSRD"/>
    <property type="match status" value="1"/>
</dbReference>
<dbReference type="Pfam" id="PF02653">
    <property type="entry name" value="BPD_transp_2"/>
    <property type="match status" value="1"/>
</dbReference>